<proteinExistence type="evidence at protein level"/>
<keyword id="KW-0012">Acyltransferase</keyword>
<keyword id="KW-0472">Membrane</keyword>
<keyword id="KW-0732">Signal</keyword>
<keyword id="KW-0808">Transferase</keyword>
<keyword id="KW-0812">Transmembrane</keyword>
<keyword id="KW-1133">Transmembrane helix</keyword>
<sequence length="377" mass="43171">MKPFSPELLVLSFILLVLSCAIRPAKGRWILWVIIVALNTYLTMTTTGDSTLDYDIANNLFVITLTATDYILLTDVQRELQFRNQKGVEQASLLERIKWATWLVQSRRGVGWNWEPKIFVHRFSPKTSRLSFLLQQLVTGARHYLICDLVSLYSRSPVAFAEPLASRPLIWRCADIAAWLLFTTNQVSILLTALSLMQVLSGYSEPQDWVPVFGRWRDAYTVRRFWGRSWHQLVRRCLSSPGKYLSTKVLGLKPGSNPALYVQLYAAFFLSGVLHAIGDFKVHEDWYKAGTMEFFCVQAVIIQMEDGVLWVGRKLGIKETWYWRALGHLWTVAWFVYSCPNWLGATISGRGKASMALESSLVLGLYRGEWHPPRVAQ</sequence>
<gene>
    <name evidence="4" type="primary">ple2</name>
</gene>
<evidence type="ECO:0000250" key="1">
    <source>
        <dbReference type="UniProtKB" id="A0A2L0VXR0"/>
    </source>
</evidence>
<evidence type="ECO:0000255" key="2"/>
<evidence type="ECO:0000269" key="3">
    <source>
    </source>
</evidence>
<evidence type="ECO:0000303" key="4">
    <source>
    </source>
</evidence>
<evidence type="ECO:0000305" key="5"/>
<dbReference type="EC" id="2.3.1.-" evidence="3"/>
<dbReference type="EMBL" id="LC314149">
    <property type="protein sequence ID" value="BCI98770.1"/>
    <property type="molecule type" value="Genomic_DNA"/>
</dbReference>
<dbReference type="UniPathway" id="UPA00213"/>
<dbReference type="GO" id="GO:0016020">
    <property type="term" value="C:membrane"/>
    <property type="evidence" value="ECO:0007669"/>
    <property type="project" value="UniProtKB-SubCell"/>
</dbReference>
<dbReference type="GO" id="GO:0008374">
    <property type="term" value="F:O-acyltransferase activity"/>
    <property type="evidence" value="ECO:0007669"/>
    <property type="project" value="InterPro"/>
</dbReference>
<dbReference type="GO" id="GO:0016114">
    <property type="term" value="P:terpenoid biosynthetic process"/>
    <property type="evidence" value="ECO:0007669"/>
    <property type="project" value="UniProtKB-UniPathway"/>
</dbReference>
<dbReference type="InterPro" id="IPR044851">
    <property type="entry name" value="Wax_synthase"/>
</dbReference>
<dbReference type="InterPro" id="IPR032805">
    <property type="entry name" value="Wax_synthase_dom"/>
</dbReference>
<dbReference type="PANTHER" id="PTHR31595">
    <property type="entry name" value="LONG-CHAIN-ALCOHOL O-FATTY-ACYLTRANSFERASE 3-RELATED"/>
    <property type="match status" value="1"/>
</dbReference>
<dbReference type="PANTHER" id="PTHR31595:SF57">
    <property type="entry name" value="OS04G0481900 PROTEIN"/>
    <property type="match status" value="1"/>
</dbReference>
<dbReference type="Pfam" id="PF13813">
    <property type="entry name" value="MBOAT_2"/>
    <property type="match status" value="1"/>
</dbReference>
<comment type="function">
    <text evidence="1 3">Acetyltransferase; part of the gene cluster that mediates the biosynthesis of pleuromutilin, a tricyclic diterpene showing antibacterial properties (PubMed:28924980). The geranylgeranyl diphosphate (GGPP) synthase ple4 catalyzes the first step in pleuromutilin biosynthesis (PubMed:28924980). GGPP is then substrate of the premutilin synthase (PS) ple3 to yield premutilin (PubMed:28924980). Premutilin synthase is a bifunctional enzyme composed of the fusion of a class II diterpene cyclase (DTC) and a class I diterpene synthase (DTS), with the corresponding domains and active sites containing characteristic aspartate-rich motifs (By similarity). GGPP is first converted to mutildienyl-diphosphate (MPP) at the class II DTC site (By similarity). MPP is subsequently further cyclized at the class I DTS site, followed by a 1,5-hydride shift and addition of water prior to terminating deprotonation, to yield premutilin (By similarity). The cytochrome P450 monooxygenases ple5 and ple6 hydroxylate premutilin at C-11 and C-3, respectively, producing 11-hydroxypremutilin and 3-hydroxypremutilin (PubMed:28924980). The combination of the actions of both ple5 and ple6 leads to the production of 3,11-dihydroxypremutilin (PubMed:28924980). The short chain dehydrogenase ple7 further converts 3,11-dihydroxypremutilin into mutilin (PubMed:28924980). The acetyltransferase ple2 then acetylates mutilin to produce 14-O-acetylmutilin (PubMed:28924980). Finally, the cytochrome P450 monooxygenase ple1 catalyzes hydroxylation on the alpha position of the acetyl side chain of 14-O-acetylmutilin to yield pleuromutilin (PubMed:28924980).</text>
</comment>
<comment type="pathway">
    <text evidence="3">Secondary metabolite biosynthesis; terpenoid biosynthesis.</text>
</comment>
<comment type="subcellular location">
    <subcellularLocation>
        <location evidence="2">Membrane</location>
        <topology evidence="2">Multi-pass membrane protein</topology>
    </subcellularLocation>
</comment>
<comment type="similarity">
    <text evidence="5">Belongs to the wax synthase family.</text>
</comment>
<feature type="signal peptide" evidence="2">
    <location>
        <begin position="1"/>
        <end position="27"/>
    </location>
</feature>
<feature type="chain" id="PRO_5028296751" description="Acetyltransferase ple2">
    <location>
        <begin position="28"/>
        <end position="377"/>
    </location>
</feature>
<feature type="transmembrane region" description="Helical" evidence="2">
    <location>
        <begin position="29"/>
        <end position="49"/>
    </location>
</feature>
<feature type="transmembrane region" description="Helical" evidence="2">
    <location>
        <begin position="56"/>
        <end position="76"/>
    </location>
</feature>
<feature type="transmembrane region" description="Helical" evidence="2">
    <location>
        <begin position="176"/>
        <end position="196"/>
    </location>
</feature>
<feature type="transmembrane region" description="Helical" evidence="2">
    <location>
        <begin position="258"/>
        <end position="278"/>
    </location>
</feature>
<name>PLE2_RHOPP</name>
<accession>A0A6S6QLX9</accession>
<reference key="1">
    <citation type="journal article" date="2017" name="ChemBioChem">
        <title>Biosynthetic machinery of diterpene pleuromutilin isolated from basidiomycete fungi.</title>
        <authorList>
            <person name="Yamane M."/>
            <person name="Minami A."/>
            <person name="Liu C."/>
            <person name="Ozaki T."/>
            <person name="Takeuchi I."/>
            <person name="Tsukagoshi T."/>
            <person name="Tokiwano T."/>
            <person name="Gomi K."/>
            <person name="Oikawa H."/>
        </authorList>
    </citation>
    <scope>NUCLEOTIDE SEQUENCE [GENOMIC DNA]</scope>
    <scope>FUNCTION</scope>
    <scope>CATALYTIC ACTIVITY</scope>
    <scope>PATHWAY</scope>
    <source>
        <strain>ATCC 20527</strain>
    </source>
</reference>
<organism>
    <name type="scientific">Rhodocybe pseudopiperita</name>
    <name type="common">Clitopilus pseudopiperitus</name>
    <dbReference type="NCBI Taxonomy" id="693819"/>
    <lineage>
        <taxon>Eukaryota</taxon>
        <taxon>Fungi</taxon>
        <taxon>Dikarya</taxon>
        <taxon>Basidiomycota</taxon>
        <taxon>Agaricomycotina</taxon>
        <taxon>Agaricomycetes</taxon>
        <taxon>Agaricomycetidae</taxon>
        <taxon>Agaricales</taxon>
        <taxon>Tricholomatineae</taxon>
        <taxon>Entolomataceae</taxon>
        <taxon>Rhodocybe</taxon>
    </lineage>
</organism>
<protein>
    <recommendedName>
        <fullName evidence="4">Acetyltransferase ple2</fullName>
        <ecNumber evidence="3">2.3.1.-</ecNumber>
    </recommendedName>
    <alternativeName>
        <fullName evidence="4">Pleuromutilin biosynthesis cluster protein 2</fullName>
    </alternativeName>
</protein>